<feature type="chain" id="PRO_0000388203" description="ATPase GET3">
    <location>
        <begin position="1"/>
        <end position="325"/>
    </location>
</feature>
<feature type="active site" evidence="1">
    <location>
        <position position="63"/>
    </location>
</feature>
<feature type="binding site" evidence="1">
    <location>
        <begin position="34"/>
        <end position="41"/>
    </location>
    <ligand>
        <name>ATP</name>
        <dbReference type="ChEBI" id="CHEBI:30616"/>
    </ligand>
</feature>
<feature type="binding site" evidence="1">
    <location>
        <position position="243"/>
    </location>
    <ligand>
        <name>ATP</name>
        <dbReference type="ChEBI" id="CHEBI:30616"/>
    </ligand>
</feature>
<feature type="binding site" evidence="1">
    <location>
        <position position="270"/>
    </location>
    <ligand>
        <name>ATP</name>
        <dbReference type="ChEBI" id="CHEBI:30616"/>
    </ligand>
</feature>
<feature type="binding site" evidence="1">
    <location>
        <position position="281"/>
    </location>
    <ligand>
        <name>Zn(2+)</name>
        <dbReference type="ChEBI" id="CHEBI:29105"/>
        <note>ligand shared between dimeric partners</note>
    </ligand>
</feature>
<feature type="binding site" evidence="1">
    <location>
        <position position="284"/>
    </location>
    <ligand>
        <name>Zn(2+)</name>
        <dbReference type="ChEBI" id="CHEBI:29105"/>
        <note>ligand shared between dimeric partners</note>
    </ligand>
</feature>
<sequence>MSSAALVPADDILEPTLQSILDQKSLRWIFVGGKGGVGKTTTSCSLAIQLAKVRKSVLLISTDPAHNLSDAFGQKFGKEARLVDGFDNLSAMEIDPSASMQDLLAAGGEQGEDMGFGLGGMMQDLAFSIPGVDEAMSFAEVLKQVKSLSYEVIVFDTAPTGHTLRFLQFPTVLEKGLAKLSQLSNQFGPMLNSVLGARGGLPGGQNLDEVLSKMESLRETISEVNAQFKDADLTTFVCVCIAEFLSLYETERMIQELTSYQIDTHAIVVNQLLFPGKDSTCEQCKARRKMQKKYLDEIAELYEDFNVVRMPLLVEEVRGKEKLER</sequence>
<protein>
    <recommendedName>
        <fullName evidence="1">ATPase GET3</fullName>
        <ecNumber evidence="1">3.6.-.-</ecNumber>
    </recommendedName>
    <alternativeName>
        <fullName evidence="1">Arsenical pump-driving ATPase</fullName>
    </alternativeName>
    <alternativeName>
        <fullName evidence="1">Arsenite-stimulated ATPase</fullName>
    </alternativeName>
    <alternativeName>
        <fullName evidence="1">Golgi to ER traffic protein 3</fullName>
    </alternativeName>
    <alternativeName>
        <fullName evidence="1">Guided entry of tail-anchored proteins 3</fullName>
    </alternativeName>
</protein>
<dbReference type="EC" id="3.6.-.-" evidence="1"/>
<dbReference type="EMBL" id="ACFW01000030">
    <property type="protein sequence ID" value="EER26417.1"/>
    <property type="molecule type" value="Genomic_DNA"/>
</dbReference>
<dbReference type="RefSeq" id="XP_003068562.1">
    <property type="nucleotide sequence ID" value="XM_003068516.1"/>
</dbReference>
<dbReference type="SMR" id="C5P9K5"/>
<dbReference type="GeneID" id="9694045"/>
<dbReference type="KEGG" id="cpw:9694045"/>
<dbReference type="VEuPathDB" id="FungiDB:CPC735_005890"/>
<dbReference type="HOGENOM" id="CLU_040761_0_0_1"/>
<dbReference type="OrthoDB" id="1770at2759"/>
<dbReference type="Proteomes" id="UP000009084">
    <property type="component" value="Unassembled WGS sequence"/>
</dbReference>
<dbReference type="GO" id="GO:0043529">
    <property type="term" value="C:GET complex"/>
    <property type="evidence" value="ECO:0007669"/>
    <property type="project" value="TreeGrafter"/>
</dbReference>
<dbReference type="GO" id="GO:0005524">
    <property type="term" value="F:ATP binding"/>
    <property type="evidence" value="ECO:0007669"/>
    <property type="project" value="UniProtKB-UniRule"/>
</dbReference>
<dbReference type="GO" id="GO:0016887">
    <property type="term" value="F:ATP hydrolysis activity"/>
    <property type="evidence" value="ECO:0007669"/>
    <property type="project" value="InterPro"/>
</dbReference>
<dbReference type="GO" id="GO:0046872">
    <property type="term" value="F:metal ion binding"/>
    <property type="evidence" value="ECO:0007669"/>
    <property type="project" value="UniProtKB-KW"/>
</dbReference>
<dbReference type="GO" id="GO:0071816">
    <property type="term" value="P:tail-anchored membrane protein insertion into ER membrane"/>
    <property type="evidence" value="ECO:0007669"/>
    <property type="project" value="TreeGrafter"/>
</dbReference>
<dbReference type="CDD" id="cd02035">
    <property type="entry name" value="ArsA"/>
    <property type="match status" value="1"/>
</dbReference>
<dbReference type="FunFam" id="3.40.50.300:FF:000235">
    <property type="entry name" value="ATPase ASNA1"/>
    <property type="match status" value="1"/>
</dbReference>
<dbReference type="Gene3D" id="3.40.50.300">
    <property type="entry name" value="P-loop containing nucleotide triphosphate hydrolases"/>
    <property type="match status" value="1"/>
</dbReference>
<dbReference type="HAMAP" id="MF_03112">
    <property type="entry name" value="Asna1_Get3"/>
    <property type="match status" value="1"/>
</dbReference>
<dbReference type="InterPro" id="IPR025723">
    <property type="entry name" value="Anion-transp_ATPase-like_dom"/>
</dbReference>
<dbReference type="InterPro" id="IPR016300">
    <property type="entry name" value="ATPase_ArsA/GET3"/>
</dbReference>
<dbReference type="InterPro" id="IPR027542">
    <property type="entry name" value="ATPase_ArsA/GET3_euk"/>
</dbReference>
<dbReference type="InterPro" id="IPR027417">
    <property type="entry name" value="P-loop_NTPase"/>
</dbReference>
<dbReference type="NCBIfam" id="TIGR00345">
    <property type="entry name" value="GET3_arsA_TRC40"/>
    <property type="match status" value="1"/>
</dbReference>
<dbReference type="PANTHER" id="PTHR10803">
    <property type="entry name" value="ARSENICAL PUMP-DRIVING ATPASE ARSENITE-TRANSLOCATING ATPASE"/>
    <property type="match status" value="1"/>
</dbReference>
<dbReference type="PANTHER" id="PTHR10803:SF3">
    <property type="entry name" value="ATPASE GET3"/>
    <property type="match status" value="1"/>
</dbReference>
<dbReference type="Pfam" id="PF02374">
    <property type="entry name" value="ArsA_ATPase"/>
    <property type="match status" value="1"/>
</dbReference>
<dbReference type="SUPFAM" id="SSF52540">
    <property type="entry name" value="P-loop containing nucleoside triphosphate hydrolases"/>
    <property type="match status" value="1"/>
</dbReference>
<comment type="function">
    <text evidence="1">ATPase required for the post-translational delivery of tail-anchored (TA) proteins to the endoplasmic reticulum. Recognizes and selectively binds the transmembrane domain of TA proteins in the cytosol. This complex then targets to the endoplasmic reticulum by membrane-bound receptors, where the tail-anchored protein is released for insertion. This process is regulated by ATP binding and hydrolysis. ATP binding drives the homodimer towards the closed dimer state, facilitating recognition of newly synthesized TA membrane proteins. ATP hydrolysis is required for insertion. Subsequently, the homodimer reverts towards the open dimer state, lowering its affinity for the membrane-bound receptor, and returning it to the cytosol to initiate a new round of targeting.</text>
</comment>
<comment type="subunit">
    <text evidence="1">Homodimer.</text>
</comment>
<comment type="subcellular location">
    <subcellularLocation>
        <location evidence="1">Cytoplasm</location>
    </subcellularLocation>
    <subcellularLocation>
        <location evidence="1">Endoplasmic reticulum</location>
    </subcellularLocation>
</comment>
<comment type="similarity">
    <text evidence="1">Belongs to the arsA ATPase family.</text>
</comment>
<accession>C5P9K5</accession>
<keyword id="KW-0067">ATP-binding</keyword>
<keyword id="KW-0963">Cytoplasm</keyword>
<keyword id="KW-0256">Endoplasmic reticulum</keyword>
<keyword id="KW-0378">Hydrolase</keyword>
<keyword id="KW-0479">Metal-binding</keyword>
<keyword id="KW-0547">Nucleotide-binding</keyword>
<keyword id="KW-0813">Transport</keyword>
<keyword id="KW-0862">Zinc</keyword>
<reference key="1">
    <citation type="journal article" date="2009" name="Genome Res.">
        <title>Comparative genomic analyses of the human fungal pathogens Coccidioides and their relatives.</title>
        <authorList>
            <person name="Sharpton T.J."/>
            <person name="Stajich J.E."/>
            <person name="Rounsley S.D."/>
            <person name="Gardner M.J."/>
            <person name="Wortman J.R."/>
            <person name="Jordar V.S."/>
            <person name="Maiti R."/>
            <person name="Kodira C.D."/>
            <person name="Neafsey D.E."/>
            <person name="Zeng Q."/>
            <person name="Hung C.-Y."/>
            <person name="McMahan C."/>
            <person name="Muszewska A."/>
            <person name="Grynberg M."/>
            <person name="Mandel M.A."/>
            <person name="Kellner E.M."/>
            <person name="Barker B.M."/>
            <person name="Galgiani J.N."/>
            <person name="Orbach M.J."/>
            <person name="Kirkland T.N."/>
            <person name="Cole G.T."/>
            <person name="Henn M.R."/>
            <person name="Birren B.W."/>
            <person name="Taylor J.W."/>
        </authorList>
    </citation>
    <scope>NUCLEOTIDE SEQUENCE [LARGE SCALE GENOMIC DNA]</scope>
    <source>
        <strain>C735</strain>
    </source>
</reference>
<name>GET3_COCP7</name>
<organism>
    <name type="scientific">Coccidioides posadasii (strain C735)</name>
    <name type="common">Valley fever fungus</name>
    <dbReference type="NCBI Taxonomy" id="222929"/>
    <lineage>
        <taxon>Eukaryota</taxon>
        <taxon>Fungi</taxon>
        <taxon>Dikarya</taxon>
        <taxon>Ascomycota</taxon>
        <taxon>Pezizomycotina</taxon>
        <taxon>Eurotiomycetes</taxon>
        <taxon>Eurotiomycetidae</taxon>
        <taxon>Onygenales</taxon>
        <taxon>Onygenaceae</taxon>
        <taxon>Coccidioides</taxon>
    </lineage>
</organism>
<evidence type="ECO:0000255" key="1">
    <source>
        <dbReference type="HAMAP-Rule" id="MF_03112"/>
    </source>
</evidence>
<proteinExistence type="inferred from homology"/>
<gene>
    <name evidence="1" type="primary">GET3</name>
    <name type="ORF">CPC735_005890</name>
</gene>